<name>HDLC_ARCPA</name>
<protein>
    <recommendedName>
        <fullName>Heterodisulfide reductase subunit C-like protein</fullName>
        <ecNumber>1.8.-.-</ecNumber>
    </recommendedName>
</protein>
<feature type="chain" id="PRO_0000150085" description="Heterodisulfide reductase subunit C-like protein">
    <location>
        <begin position="1"/>
        <end position="188"/>
    </location>
</feature>
<feature type="domain" description="4Fe-4S ferredoxin-type 1" evidence="2">
    <location>
        <begin position="34"/>
        <end position="64"/>
    </location>
</feature>
<feature type="domain" description="4Fe-4S ferredoxin-type 2" evidence="2">
    <location>
        <begin position="78"/>
        <end position="109"/>
    </location>
</feature>
<feature type="binding site" evidence="1">
    <location>
        <position position="44"/>
    </location>
    <ligand>
        <name>[4Fe-4S] cluster</name>
        <dbReference type="ChEBI" id="CHEBI:49883"/>
        <label>1</label>
    </ligand>
</feature>
<feature type="binding site" evidence="1">
    <location>
        <position position="47"/>
    </location>
    <ligand>
        <name>[4Fe-4S] cluster</name>
        <dbReference type="ChEBI" id="CHEBI:49883"/>
        <label>1</label>
    </ligand>
</feature>
<feature type="binding site" evidence="1">
    <location>
        <position position="50"/>
    </location>
    <ligand>
        <name>[4Fe-4S] cluster</name>
        <dbReference type="ChEBI" id="CHEBI:49883"/>
        <label>1</label>
    </ligand>
</feature>
<feature type="binding site" evidence="1">
    <location>
        <position position="54"/>
    </location>
    <ligand>
        <name>[4Fe-4S] cluster</name>
        <dbReference type="ChEBI" id="CHEBI:49883"/>
        <label>2</label>
    </ligand>
</feature>
<feature type="binding site" evidence="1">
    <location>
        <position position="89"/>
    </location>
    <ligand>
        <name>[4Fe-4S] cluster</name>
        <dbReference type="ChEBI" id="CHEBI:49883"/>
        <label>2</label>
    </ligand>
</feature>
<feature type="binding site" evidence="1">
    <location>
        <position position="92"/>
    </location>
    <ligand>
        <name>[4Fe-4S] cluster</name>
        <dbReference type="ChEBI" id="CHEBI:49883"/>
        <label>2</label>
    </ligand>
</feature>
<feature type="binding site" evidence="1">
    <location>
        <position position="95"/>
    </location>
    <ligand>
        <name>[4Fe-4S] cluster</name>
        <dbReference type="ChEBI" id="CHEBI:49883"/>
        <label>2</label>
    </ligand>
</feature>
<feature type="binding site" evidence="1">
    <location>
        <position position="99"/>
    </location>
    <ligand>
        <name>[4Fe-4S] cluster</name>
        <dbReference type="ChEBI" id="CHEBI:49883"/>
        <label>1</label>
    </ligand>
</feature>
<feature type="sequence conflict" description="In Ref. 2; AA sequence." evidence="4" ref="2">
    <original>M</original>
    <variation>H</variation>
    <location>
        <position position="4"/>
    </location>
</feature>
<reference key="1">
    <citation type="journal article" date="2010" name="Stand. Genomic Sci.">
        <title>Complete genome sequence of Archaeoglobus profundus type strain (AV18).</title>
        <authorList>
            <person name="von Jan M."/>
            <person name="Lapidus A."/>
            <person name="Del Rio T.G."/>
            <person name="Copeland A."/>
            <person name="Tice H."/>
            <person name="Cheng J.F."/>
            <person name="Lucas S."/>
            <person name="Chen F."/>
            <person name="Nolan M."/>
            <person name="Goodwin L."/>
            <person name="Han C."/>
            <person name="Pitluck S."/>
            <person name="Liolios K."/>
            <person name="Ivanova N."/>
            <person name="Mavromatis K."/>
            <person name="Ovchinnikova G."/>
            <person name="Chertkov O."/>
            <person name="Pati A."/>
            <person name="Chen A."/>
            <person name="Palaniappan K."/>
            <person name="Land M."/>
            <person name="Hauser L."/>
            <person name="Chang Y.J."/>
            <person name="Jeffries C.D."/>
            <person name="Saunders E."/>
            <person name="Brettin T."/>
            <person name="Detter J.C."/>
            <person name="Chain P."/>
            <person name="Eichinger K."/>
            <person name="Huber H."/>
            <person name="Spring S."/>
            <person name="Rohde M."/>
            <person name="Goker M."/>
            <person name="Wirth R."/>
            <person name="Woyke T."/>
            <person name="Bristow J."/>
            <person name="Eisen J.A."/>
            <person name="Markowitz V."/>
            <person name="Hugenholtz P."/>
            <person name="Kyrpides N.C."/>
            <person name="Klenk H.P."/>
        </authorList>
    </citation>
    <scope>NUCLEOTIDE SEQUENCE [LARGE SCALE GENOMIC DNA]</scope>
    <source>
        <strain>DSM 5631 / JCM 9629 / NBRC 100127 / Av18</strain>
    </source>
</reference>
<reference evidence="4" key="2">
    <citation type="journal article" date="2004" name="Eur. J. Biochem.">
        <title>Two distinct heterodisulfide reductase-like enzymes in the sulfate-reducing archaeon Archaeoglobus profundus.</title>
        <authorList>
            <person name="Mander G.J."/>
            <person name="Pierik A.J."/>
            <person name="Huber H."/>
            <person name="Hedderich R."/>
        </authorList>
    </citation>
    <scope>PROTEIN SEQUENCE OF 1-20</scope>
    <scope>FUNCTION</scope>
    <scope>SUBUNIT</scope>
    <scope>SUBCELLULAR LOCATION</scope>
</reference>
<sequence>MEMMEEGVPDVINLSYLAEREETELEKRVAEIIKELGAERLMYCMQCGACASICPLARVGFEWYNKKLIKALILGLRDELLDDPTPWACVACNRCTEICPRRVSPFEVMFAMRRLMAEEYAIGSLAIEGLRSLYEYGHAVYMAGREARKKVGLPEKPPSTESDPKALEDLRKILKQTKLAELGLVPME</sequence>
<evidence type="ECO:0000255" key="1"/>
<evidence type="ECO:0000255" key="2">
    <source>
        <dbReference type="PROSITE-ProRule" id="PRU00711"/>
    </source>
</evidence>
<evidence type="ECO:0000269" key="3">
    <source>
    </source>
</evidence>
<evidence type="ECO:0000305" key="4"/>
<organism>
    <name type="scientific">Archaeoglobus profundus (strain DSM 5631 / JCM 9629 / NBRC 100127 / Av18)</name>
    <dbReference type="NCBI Taxonomy" id="572546"/>
    <lineage>
        <taxon>Archaea</taxon>
        <taxon>Methanobacteriati</taxon>
        <taxon>Methanobacteriota</taxon>
        <taxon>Archaeoglobi</taxon>
        <taxon>Archaeoglobales</taxon>
        <taxon>Archaeoglobaceae</taxon>
        <taxon>Archaeoglobus</taxon>
    </lineage>
</organism>
<accession>P84621</accession>
<accession>D2REQ6</accession>
<dbReference type="EC" id="1.8.-.-"/>
<dbReference type="EMBL" id="CP001857">
    <property type="protein sequence ID" value="ADB58600.1"/>
    <property type="molecule type" value="Genomic_DNA"/>
</dbReference>
<dbReference type="RefSeq" id="WP_012940936.1">
    <property type="nucleotide sequence ID" value="NC_013741.1"/>
</dbReference>
<dbReference type="SMR" id="P84621"/>
<dbReference type="STRING" id="572546.Arcpr_1554"/>
<dbReference type="PaxDb" id="572546-Arcpr_1554"/>
<dbReference type="GeneID" id="8740244"/>
<dbReference type="KEGG" id="apo:Arcpr_1554"/>
<dbReference type="eggNOG" id="arCOG00964">
    <property type="taxonomic scope" value="Archaea"/>
</dbReference>
<dbReference type="HOGENOM" id="CLU_121273_0_0_2"/>
<dbReference type="OrthoDB" id="144910at2157"/>
<dbReference type="Proteomes" id="UP000001901">
    <property type="component" value="Chromosome"/>
</dbReference>
<dbReference type="GO" id="GO:0005737">
    <property type="term" value="C:cytoplasm"/>
    <property type="evidence" value="ECO:0007669"/>
    <property type="project" value="UniProtKB-SubCell"/>
</dbReference>
<dbReference type="GO" id="GO:0005886">
    <property type="term" value="C:plasma membrane"/>
    <property type="evidence" value="ECO:0007669"/>
    <property type="project" value="TreeGrafter"/>
</dbReference>
<dbReference type="GO" id="GO:0051539">
    <property type="term" value="F:4 iron, 4 sulfur cluster binding"/>
    <property type="evidence" value="ECO:0007669"/>
    <property type="project" value="UniProtKB-KW"/>
</dbReference>
<dbReference type="GO" id="GO:0046872">
    <property type="term" value="F:metal ion binding"/>
    <property type="evidence" value="ECO:0007669"/>
    <property type="project" value="UniProtKB-KW"/>
</dbReference>
<dbReference type="GO" id="GO:0016491">
    <property type="term" value="F:oxidoreductase activity"/>
    <property type="evidence" value="ECO:0007669"/>
    <property type="project" value="UniProtKB-KW"/>
</dbReference>
<dbReference type="Gene3D" id="1.10.1060.10">
    <property type="entry name" value="Alpha-helical ferredoxin"/>
    <property type="match status" value="1"/>
</dbReference>
<dbReference type="InterPro" id="IPR017896">
    <property type="entry name" value="4Fe4S_Fe-S-bd"/>
</dbReference>
<dbReference type="InterPro" id="IPR017900">
    <property type="entry name" value="4Fe4S_Fe_S_CS"/>
</dbReference>
<dbReference type="InterPro" id="IPR051460">
    <property type="entry name" value="HdrC_iron-sulfur_subunit"/>
</dbReference>
<dbReference type="InterPro" id="IPR009051">
    <property type="entry name" value="Helical_ferredxn"/>
</dbReference>
<dbReference type="PANTHER" id="PTHR43255:SF1">
    <property type="entry name" value="IRON-SULFUR-BINDING OXIDOREDUCTASE FADF-RELATED"/>
    <property type="match status" value="1"/>
</dbReference>
<dbReference type="PANTHER" id="PTHR43255">
    <property type="entry name" value="IRON-SULFUR-BINDING OXIDOREDUCTASE FADF-RELATED-RELATED"/>
    <property type="match status" value="1"/>
</dbReference>
<dbReference type="Pfam" id="PF13183">
    <property type="entry name" value="Fer4_8"/>
    <property type="match status" value="1"/>
</dbReference>
<dbReference type="SUPFAM" id="SSF46548">
    <property type="entry name" value="alpha-helical ferredoxin"/>
    <property type="match status" value="1"/>
</dbReference>
<dbReference type="PROSITE" id="PS00198">
    <property type="entry name" value="4FE4S_FER_1"/>
    <property type="match status" value="2"/>
</dbReference>
<dbReference type="PROSITE" id="PS51379">
    <property type="entry name" value="4FE4S_FER_2"/>
    <property type="match status" value="2"/>
</dbReference>
<proteinExistence type="evidence at protein level"/>
<gene>
    <name type="primary">hdlC</name>
    <name type="ordered locus">Arcpr_1554</name>
</gene>
<comment type="function">
    <text evidence="3">Has oxidoreductase activity. The Hdl and Mvh subunits may together mediate electron transfer from hydrogen to an unidentified electron acceptor on the cytoplasmic side of the membrane.</text>
</comment>
<comment type="subunit">
    <text evidence="3">The heterodisulfide reductase is composed of three subunits; HdlA, HdlB and HdlC. It forms a complex with the F420-non-reducing hydrogenase (Mvh), which provides the reducing equivalents to the heterodisulfide reductase.</text>
</comment>
<comment type="subcellular location">
    <subcellularLocation>
        <location evidence="3">Cytoplasm</location>
    </subcellularLocation>
</comment>
<comment type="similarity">
    <text evidence="4">Belongs to the HdrC family.</text>
</comment>
<keyword id="KW-0004">4Fe-4S</keyword>
<keyword id="KW-0963">Cytoplasm</keyword>
<keyword id="KW-0903">Direct protein sequencing</keyword>
<keyword id="KW-0408">Iron</keyword>
<keyword id="KW-0411">Iron-sulfur</keyword>
<keyword id="KW-0479">Metal-binding</keyword>
<keyword id="KW-0560">Oxidoreductase</keyword>
<keyword id="KW-1185">Reference proteome</keyword>
<keyword id="KW-0677">Repeat</keyword>